<evidence type="ECO:0000250" key="1"/>
<evidence type="ECO:0000256" key="2">
    <source>
        <dbReference type="SAM" id="MobiDB-lite"/>
    </source>
</evidence>
<evidence type="ECO:0000305" key="3"/>
<comment type="function">
    <text evidence="1">Recognizes and binds the 7-methylguanosine-containing mRNA cap during an early step in the initiation of protein synthesis and facilitates ribosome binding by inducing the unwinding of the mRNAs secondary structure.</text>
</comment>
<comment type="subunit">
    <text evidence="1">eIF4F is a multi-subunit complex, the composition of which varies with external and internal environmental conditions. It is composed of at least EIF4A, EIF4E and EIF4G (By similarity).</text>
</comment>
<comment type="interaction">
    <interactant intactId="EBI-18394358">
        <id>A6NMX2</id>
    </interactant>
    <interactant intactId="EBI-74090">
        <id>Q13541</id>
        <label>EIF4EBP1</label>
    </interactant>
    <organismsDiffer>false</organismsDiffer>
    <experiments>4</experiments>
</comment>
<comment type="similarity">
    <text evidence="3">Belongs to the eukaryotic initiation factor 4E family.</text>
</comment>
<proteinExistence type="evidence at protein level"/>
<name>I4E1B_HUMAN</name>
<gene>
    <name type="primary">EIF4E1B</name>
</gene>
<dbReference type="EMBL" id="AC091934">
    <property type="status" value="NOT_ANNOTATED_CDS"/>
    <property type="molecule type" value="Genomic_DNA"/>
</dbReference>
<dbReference type="CCDS" id="CCDS47345.1"/>
<dbReference type="RefSeq" id="NP_001092878.1">
    <property type="nucleotide sequence ID" value="NM_001099408.2"/>
</dbReference>
<dbReference type="RefSeq" id="NP_001362291.1">
    <property type="nucleotide sequence ID" value="NM_001375362.1"/>
</dbReference>
<dbReference type="RefSeq" id="XP_011532801.1">
    <property type="nucleotide sequence ID" value="XM_011534499.2"/>
</dbReference>
<dbReference type="SMR" id="A6NMX2"/>
<dbReference type="BioGRID" id="128966">
    <property type="interactions" value="4"/>
</dbReference>
<dbReference type="FunCoup" id="A6NMX2">
    <property type="interactions" value="848"/>
</dbReference>
<dbReference type="IntAct" id="A6NMX2">
    <property type="interactions" value="2"/>
</dbReference>
<dbReference type="STRING" id="9606.ENSP00000497422"/>
<dbReference type="GlyGen" id="A6NMX2">
    <property type="glycosylation" value="1 site, 1 O-linked glycan (1 site)"/>
</dbReference>
<dbReference type="iPTMnet" id="A6NMX2"/>
<dbReference type="PhosphoSitePlus" id="A6NMX2"/>
<dbReference type="BioMuta" id="EIF4E1B"/>
<dbReference type="jPOST" id="A6NMX2"/>
<dbReference type="MassIVE" id="A6NMX2"/>
<dbReference type="PaxDb" id="9606-ENSP00000323714"/>
<dbReference type="PeptideAtlas" id="A6NMX2"/>
<dbReference type="ProteomicsDB" id="1567"/>
<dbReference type="Antibodypedia" id="63751">
    <property type="antibodies" value="28 antibodies from 9 providers"/>
</dbReference>
<dbReference type="DNASU" id="253314"/>
<dbReference type="Ensembl" id="ENST00000318682.11">
    <property type="protein sequence ID" value="ENSP00000323714.6"/>
    <property type="gene ID" value="ENSG00000175766.13"/>
</dbReference>
<dbReference type="Ensembl" id="ENST00000504597.5">
    <property type="protein sequence ID" value="ENSP00000427633.1"/>
    <property type="gene ID" value="ENSG00000175766.13"/>
</dbReference>
<dbReference type="Ensembl" id="ENST00000647833.1">
    <property type="protein sequence ID" value="ENSP00000497422.1"/>
    <property type="gene ID" value="ENSG00000175766.13"/>
</dbReference>
<dbReference type="GeneID" id="253314"/>
<dbReference type="KEGG" id="hsa:253314"/>
<dbReference type="MANE-Select" id="ENST00000318682.11">
    <property type="protein sequence ID" value="ENSP00000323714.6"/>
    <property type="RefSeq nucleotide sequence ID" value="NM_001099408.2"/>
    <property type="RefSeq protein sequence ID" value="NP_001092878.1"/>
</dbReference>
<dbReference type="UCSC" id="uc010jkf.1">
    <property type="organism name" value="human"/>
</dbReference>
<dbReference type="AGR" id="HGNC:33179"/>
<dbReference type="CTD" id="253314"/>
<dbReference type="GeneCards" id="EIF4E1B"/>
<dbReference type="HGNC" id="HGNC:33179">
    <property type="gene designation" value="EIF4E1B"/>
</dbReference>
<dbReference type="HPA" id="ENSG00000175766">
    <property type="expression patterns" value="Group enriched (brain, epididymis, retina)"/>
</dbReference>
<dbReference type="neXtProt" id="NX_A6NMX2"/>
<dbReference type="OpenTargets" id="ENSG00000175766"/>
<dbReference type="PharmGKB" id="PA162384974"/>
<dbReference type="VEuPathDB" id="HostDB:ENSG00000175766"/>
<dbReference type="eggNOG" id="KOG1670">
    <property type="taxonomic scope" value="Eukaryota"/>
</dbReference>
<dbReference type="GeneTree" id="ENSGT00940000160838"/>
<dbReference type="HOGENOM" id="CLU_043552_1_1_1"/>
<dbReference type="InParanoid" id="A6NMX2"/>
<dbReference type="OMA" id="QTEFKMM"/>
<dbReference type="OrthoDB" id="590761at2759"/>
<dbReference type="PAN-GO" id="A6NMX2">
    <property type="GO annotations" value="3 GO annotations based on evolutionary models"/>
</dbReference>
<dbReference type="PhylomeDB" id="A6NMX2"/>
<dbReference type="TreeFam" id="TF101526"/>
<dbReference type="PathwayCommons" id="A6NMX2"/>
<dbReference type="SignaLink" id="A6NMX2"/>
<dbReference type="BioGRID-ORCS" id="253314">
    <property type="hits" value="16 hits in 1146 CRISPR screens"/>
</dbReference>
<dbReference type="GenomeRNAi" id="253314"/>
<dbReference type="Pharos" id="A6NMX2">
    <property type="development level" value="Tdark"/>
</dbReference>
<dbReference type="PRO" id="PR:A6NMX2"/>
<dbReference type="Proteomes" id="UP000005640">
    <property type="component" value="Chromosome 5"/>
</dbReference>
<dbReference type="RNAct" id="A6NMX2">
    <property type="molecule type" value="protein"/>
</dbReference>
<dbReference type="Bgee" id="ENSG00000175766">
    <property type="expression patterns" value="Expressed in male germ line stem cell (sensu Vertebrata) in testis and 48 other cell types or tissues"/>
</dbReference>
<dbReference type="ExpressionAtlas" id="A6NMX2">
    <property type="expression patterns" value="baseline and differential"/>
</dbReference>
<dbReference type="GO" id="GO:0016281">
    <property type="term" value="C:eukaryotic translation initiation factor 4F complex"/>
    <property type="evidence" value="ECO:0000318"/>
    <property type="project" value="GO_Central"/>
</dbReference>
<dbReference type="GO" id="GO:0000340">
    <property type="term" value="F:RNA 7-methylguanosine cap binding"/>
    <property type="evidence" value="ECO:0000318"/>
    <property type="project" value="GO_Central"/>
</dbReference>
<dbReference type="GO" id="GO:0003743">
    <property type="term" value="F:translation initiation factor activity"/>
    <property type="evidence" value="ECO:0000318"/>
    <property type="project" value="GO_Central"/>
</dbReference>
<dbReference type="GO" id="GO:0006417">
    <property type="term" value="P:regulation of translation"/>
    <property type="evidence" value="ECO:0007669"/>
    <property type="project" value="UniProtKB-KW"/>
</dbReference>
<dbReference type="GO" id="GO:0006413">
    <property type="term" value="P:translational initiation"/>
    <property type="evidence" value="ECO:0000318"/>
    <property type="project" value="GO_Central"/>
</dbReference>
<dbReference type="FunFam" id="3.30.760.10:FF:000002">
    <property type="entry name" value="Eukaryotic translation initiation factor 4E"/>
    <property type="match status" value="1"/>
</dbReference>
<dbReference type="Gene3D" id="3.30.760.10">
    <property type="entry name" value="RNA Cap, Translation Initiation Factor Eif4e"/>
    <property type="match status" value="1"/>
</dbReference>
<dbReference type="InterPro" id="IPR023398">
    <property type="entry name" value="TIF_eIF4e-like"/>
</dbReference>
<dbReference type="InterPro" id="IPR001040">
    <property type="entry name" value="TIF_eIF_4E"/>
</dbReference>
<dbReference type="InterPro" id="IPR019770">
    <property type="entry name" value="TIF_eIF_4E_CS"/>
</dbReference>
<dbReference type="PANTHER" id="PTHR11960">
    <property type="entry name" value="EUKARYOTIC TRANSLATION INITIATION FACTOR 4E RELATED"/>
    <property type="match status" value="1"/>
</dbReference>
<dbReference type="PANTHER" id="PTHR11960:SF3">
    <property type="entry name" value="EUKARYOTIC TRANSLATION INITIATION FACTOR 4E TYPE 1B"/>
    <property type="match status" value="1"/>
</dbReference>
<dbReference type="Pfam" id="PF01652">
    <property type="entry name" value="IF4E"/>
    <property type="match status" value="1"/>
</dbReference>
<dbReference type="SUPFAM" id="SSF55418">
    <property type="entry name" value="eIF4e-like"/>
    <property type="match status" value="1"/>
</dbReference>
<dbReference type="PROSITE" id="PS00813">
    <property type="entry name" value="IF4E"/>
    <property type="match status" value="1"/>
</dbReference>
<feature type="chain" id="PRO_0000342513" description="Eukaryotic translation initiation factor 4E type 1B">
    <location>
        <begin position="1"/>
        <end position="242"/>
    </location>
</feature>
<feature type="region of interest" description="Disordered" evidence="2">
    <location>
        <begin position="1"/>
        <end position="42"/>
    </location>
</feature>
<feature type="region of interest" description="EIF4EBP1/2/3 binding" evidence="1">
    <location>
        <begin position="62"/>
        <end position="65"/>
    </location>
</feature>
<feature type="region of interest" description="EIF4EBP1/2/3 binding" evidence="1">
    <location>
        <begin position="98"/>
        <end position="102"/>
    </location>
</feature>
<feature type="region of interest" description="EIF4EBP1/2/3 binding" evidence="1">
    <location>
        <begin position="157"/>
        <end position="164"/>
    </location>
</feature>
<feature type="compositionally biased region" description="Acidic residues" evidence="2">
    <location>
        <begin position="16"/>
        <end position="25"/>
    </location>
</feature>
<feature type="compositionally biased region" description="Polar residues" evidence="2">
    <location>
        <begin position="32"/>
        <end position="41"/>
    </location>
</feature>
<feature type="binding site" evidence="1">
    <location>
        <begin position="81"/>
        <end position="82"/>
    </location>
    <ligand>
        <name>mRNA</name>
        <dbReference type="ChEBI" id="CHEBI:33699"/>
    </ligand>
    <ligandPart>
        <name>N(7)-methylguanosine 5'-triphosphate group</name>
        <dbReference type="ChEBI" id="CHEBI:74429"/>
        <note>m7GTP residue in mRNA cap</note>
    </ligandPart>
</feature>
<feature type="binding site" evidence="1">
    <location>
        <begin position="127"/>
        <end position="128"/>
    </location>
    <ligand>
        <name>mRNA</name>
        <dbReference type="ChEBI" id="CHEBI:33699"/>
    </ligand>
    <ligandPart>
        <name>N(7)-methylguanosine 5'-triphosphate group</name>
        <dbReference type="ChEBI" id="CHEBI:74429"/>
        <note>m7GTP residue in mRNA cap</note>
    </ligandPart>
</feature>
<feature type="binding site" evidence="1">
    <location>
        <begin position="182"/>
        <end position="187"/>
    </location>
    <ligand>
        <name>mRNA</name>
        <dbReference type="ChEBI" id="CHEBI:33699"/>
    </ligand>
    <ligandPart>
        <name>N(7)-methylguanosine 5'-triphosphate group</name>
        <dbReference type="ChEBI" id="CHEBI:74429"/>
        <note>m7GTP residue in mRNA cap</note>
    </ligandPart>
</feature>
<feature type="binding site" evidence="1">
    <location>
        <begin position="230"/>
        <end position="232"/>
    </location>
    <ligand>
        <name>mRNA</name>
        <dbReference type="ChEBI" id="CHEBI:33699"/>
    </ligand>
    <ligandPart>
        <name>N(7)-methylguanosine 5'-triphosphate group</name>
        <dbReference type="ChEBI" id="CHEBI:74429"/>
        <note>m7GTP residue in mRNA cap</note>
    </ligandPart>
</feature>
<feature type="sequence variant" id="VAR_044209" description="In dbSNP:rs13163938.">
    <original>D</original>
    <variation>Y</variation>
    <location>
        <position position="227"/>
    </location>
</feature>
<accession>A6NMX2</accession>
<reference key="1">
    <citation type="journal article" date="2004" name="Nature">
        <title>The DNA sequence and comparative analysis of human chromosome 5.</title>
        <authorList>
            <person name="Schmutz J."/>
            <person name="Martin J."/>
            <person name="Terry A."/>
            <person name="Couronne O."/>
            <person name="Grimwood J."/>
            <person name="Lowry S."/>
            <person name="Gordon L.A."/>
            <person name="Scott D."/>
            <person name="Xie G."/>
            <person name="Huang W."/>
            <person name="Hellsten U."/>
            <person name="Tran-Gyamfi M."/>
            <person name="She X."/>
            <person name="Prabhakar S."/>
            <person name="Aerts A."/>
            <person name="Altherr M."/>
            <person name="Bajorek E."/>
            <person name="Black S."/>
            <person name="Branscomb E."/>
            <person name="Caoile C."/>
            <person name="Challacombe J.F."/>
            <person name="Chan Y.M."/>
            <person name="Denys M."/>
            <person name="Detter J.C."/>
            <person name="Escobar J."/>
            <person name="Flowers D."/>
            <person name="Fotopulos D."/>
            <person name="Glavina T."/>
            <person name="Gomez M."/>
            <person name="Gonzales E."/>
            <person name="Goodstein D."/>
            <person name="Grigoriev I."/>
            <person name="Groza M."/>
            <person name="Hammon N."/>
            <person name="Hawkins T."/>
            <person name="Haydu L."/>
            <person name="Israni S."/>
            <person name="Jett J."/>
            <person name="Kadner K."/>
            <person name="Kimball H."/>
            <person name="Kobayashi A."/>
            <person name="Lopez F."/>
            <person name="Lou Y."/>
            <person name="Martinez D."/>
            <person name="Medina C."/>
            <person name="Morgan J."/>
            <person name="Nandkeshwar R."/>
            <person name="Noonan J.P."/>
            <person name="Pitluck S."/>
            <person name="Pollard M."/>
            <person name="Predki P."/>
            <person name="Priest J."/>
            <person name="Ramirez L."/>
            <person name="Retterer J."/>
            <person name="Rodriguez A."/>
            <person name="Rogers S."/>
            <person name="Salamov A."/>
            <person name="Salazar A."/>
            <person name="Thayer N."/>
            <person name="Tice H."/>
            <person name="Tsai M."/>
            <person name="Ustaszewska A."/>
            <person name="Vo N."/>
            <person name="Wheeler J."/>
            <person name="Wu K."/>
            <person name="Yang J."/>
            <person name="Dickson M."/>
            <person name="Cheng J.-F."/>
            <person name="Eichler E.E."/>
            <person name="Olsen A."/>
            <person name="Pennacchio L.A."/>
            <person name="Rokhsar D.S."/>
            <person name="Richardson P."/>
            <person name="Lucas S.M."/>
            <person name="Myers R.M."/>
            <person name="Rubin E.M."/>
        </authorList>
    </citation>
    <scope>NUCLEOTIDE SEQUENCE [LARGE SCALE GENOMIC DNA]</scope>
</reference>
<reference key="2">
    <citation type="journal article" date="2005" name="BMC Evol. Biol.">
        <title>Phylogenetic analysis of eIF4E-family members.</title>
        <authorList>
            <person name="Joshi B."/>
            <person name="Lee K."/>
            <person name="Maeder D.L."/>
            <person name="Jagus R."/>
        </authorList>
    </citation>
    <scope>GENE FAMILY</scope>
</reference>
<keyword id="KW-0396">Initiation factor</keyword>
<keyword id="KW-0648">Protein biosynthesis</keyword>
<keyword id="KW-1267">Proteomics identification</keyword>
<keyword id="KW-1185">Reference proteome</keyword>
<keyword id="KW-0694">RNA-binding</keyword>
<keyword id="KW-0810">Translation regulation</keyword>
<organism>
    <name type="scientific">Homo sapiens</name>
    <name type="common">Human</name>
    <dbReference type="NCBI Taxonomy" id="9606"/>
    <lineage>
        <taxon>Eukaryota</taxon>
        <taxon>Metazoa</taxon>
        <taxon>Chordata</taxon>
        <taxon>Craniata</taxon>
        <taxon>Vertebrata</taxon>
        <taxon>Euteleostomi</taxon>
        <taxon>Mammalia</taxon>
        <taxon>Eutheria</taxon>
        <taxon>Euarchontoglires</taxon>
        <taxon>Primates</taxon>
        <taxon>Haplorrhini</taxon>
        <taxon>Catarrhini</taxon>
        <taxon>Hominidae</taxon>
        <taxon>Homo</taxon>
    </lineage>
</organism>
<protein>
    <recommendedName>
        <fullName>Eukaryotic translation initiation factor 4E type 1B</fullName>
    </recommendedName>
</protein>
<sequence length="242" mass="27596">MLAVEVSEAEGGIREWEEEEKEEEAAERTPTGEKSPNSPRTLLSLRGKARTGGPMEVKLELHPLQNRWALWFFKNDRSRAWQDNLHLVTKVDTVEDFWALYSHIQLASKLSSGCDYALFKDGIQPMWEDSRNKRGGRWLVSLAKQQRHIELDRLWLETLLCLIGESFEEHSREVCGAVVNIRTKGDKIAVWTREAENQAGVLHVGRVYKERLGLSPKTIIGYQAHADTATKSNSLAKNKFVV</sequence>